<accession>A5GKJ3</accession>
<gene>
    <name evidence="1" type="primary">aroA</name>
    <name type="ordered locus">SynWH7803_1032</name>
</gene>
<feature type="chain" id="PRO_0000325391" description="3-phosphoshikimate 1-carboxyvinyltransferase">
    <location>
        <begin position="1"/>
        <end position="439"/>
    </location>
</feature>
<feature type="active site" description="Proton acceptor" evidence="1">
    <location>
        <position position="326"/>
    </location>
</feature>
<feature type="binding site" evidence="1">
    <location>
        <position position="27"/>
    </location>
    <ligand>
        <name>3-phosphoshikimate</name>
        <dbReference type="ChEBI" id="CHEBI:145989"/>
    </ligand>
</feature>
<feature type="binding site" evidence="1">
    <location>
        <position position="27"/>
    </location>
    <ligand>
        <name>phosphoenolpyruvate</name>
        <dbReference type="ChEBI" id="CHEBI:58702"/>
    </ligand>
</feature>
<feature type="binding site" evidence="1">
    <location>
        <position position="28"/>
    </location>
    <ligand>
        <name>3-phosphoshikimate</name>
        <dbReference type="ChEBI" id="CHEBI:145989"/>
    </ligand>
</feature>
<feature type="binding site" evidence="1">
    <location>
        <position position="32"/>
    </location>
    <ligand>
        <name>3-phosphoshikimate</name>
        <dbReference type="ChEBI" id="CHEBI:145989"/>
    </ligand>
</feature>
<feature type="binding site" evidence="1">
    <location>
        <position position="101"/>
    </location>
    <ligand>
        <name>phosphoenolpyruvate</name>
        <dbReference type="ChEBI" id="CHEBI:58702"/>
    </ligand>
</feature>
<feature type="binding site" evidence="1">
    <location>
        <position position="130"/>
    </location>
    <ligand>
        <name>phosphoenolpyruvate</name>
        <dbReference type="ChEBI" id="CHEBI:58702"/>
    </ligand>
</feature>
<feature type="binding site" evidence="1">
    <location>
        <position position="175"/>
    </location>
    <ligand>
        <name>3-phosphoshikimate</name>
        <dbReference type="ChEBI" id="CHEBI:145989"/>
    </ligand>
</feature>
<feature type="binding site" evidence="1">
    <location>
        <position position="177"/>
    </location>
    <ligand>
        <name>3-phosphoshikimate</name>
        <dbReference type="ChEBI" id="CHEBI:145989"/>
    </ligand>
</feature>
<feature type="binding site" evidence="1">
    <location>
        <position position="177"/>
    </location>
    <ligand>
        <name>phosphoenolpyruvate</name>
        <dbReference type="ChEBI" id="CHEBI:58702"/>
    </ligand>
</feature>
<feature type="binding site" evidence="1">
    <location>
        <position position="326"/>
    </location>
    <ligand>
        <name>3-phosphoshikimate</name>
        <dbReference type="ChEBI" id="CHEBI:145989"/>
    </ligand>
</feature>
<feature type="binding site" evidence="1">
    <location>
        <position position="353"/>
    </location>
    <ligand>
        <name>3-phosphoshikimate</name>
        <dbReference type="ChEBI" id="CHEBI:145989"/>
    </ligand>
</feature>
<feature type="binding site" evidence="1">
    <location>
        <position position="357"/>
    </location>
    <ligand>
        <name>phosphoenolpyruvate</name>
        <dbReference type="ChEBI" id="CHEBI:58702"/>
    </ligand>
</feature>
<feature type="binding site" evidence="1">
    <location>
        <position position="399"/>
    </location>
    <ligand>
        <name>phosphoenolpyruvate</name>
        <dbReference type="ChEBI" id="CHEBI:58702"/>
    </ligand>
</feature>
<protein>
    <recommendedName>
        <fullName evidence="1">3-phosphoshikimate 1-carboxyvinyltransferase</fullName>
        <ecNumber evidence="1">2.5.1.19</ecNumber>
    </recommendedName>
    <alternativeName>
        <fullName evidence="1">5-enolpyruvylshikimate-3-phosphate synthase</fullName>
        <shortName evidence="1">EPSP synthase</shortName>
        <shortName evidence="1">EPSPS</shortName>
    </alternativeName>
</protein>
<comment type="function">
    <text evidence="1">Catalyzes the transfer of the enolpyruvyl moiety of phosphoenolpyruvate (PEP) to the 5-hydroxyl of shikimate-3-phosphate (S3P) to produce enolpyruvyl shikimate-3-phosphate and inorganic phosphate.</text>
</comment>
<comment type="catalytic activity">
    <reaction evidence="1">
        <text>3-phosphoshikimate + phosphoenolpyruvate = 5-O-(1-carboxyvinyl)-3-phosphoshikimate + phosphate</text>
        <dbReference type="Rhea" id="RHEA:21256"/>
        <dbReference type="ChEBI" id="CHEBI:43474"/>
        <dbReference type="ChEBI" id="CHEBI:57701"/>
        <dbReference type="ChEBI" id="CHEBI:58702"/>
        <dbReference type="ChEBI" id="CHEBI:145989"/>
        <dbReference type="EC" id="2.5.1.19"/>
    </reaction>
    <physiologicalReaction direction="left-to-right" evidence="1">
        <dbReference type="Rhea" id="RHEA:21257"/>
    </physiologicalReaction>
</comment>
<comment type="pathway">
    <text evidence="1">Metabolic intermediate biosynthesis; chorismate biosynthesis; chorismate from D-erythrose 4-phosphate and phosphoenolpyruvate: step 6/7.</text>
</comment>
<comment type="subunit">
    <text evidence="1">Monomer.</text>
</comment>
<comment type="subcellular location">
    <subcellularLocation>
        <location evidence="1">Cytoplasm</location>
    </subcellularLocation>
</comment>
<comment type="similarity">
    <text evidence="1">Belongs to the EPSP synthase family.</text>
</comment>
<organism>
    <name type="scientific">Synechococcus sp. (strain WH7803)</name>
    <dbReference type="NCBI Taxonomy" id="32051"/>
    <lineage>
        <taxon>Bacteria</taxon>
        <taxon>Bacillati</taxon>
        <taxon>Cyanobacteriota</taxon>
        <taxon>Cyanophyceae</taxon>
        <taxon>Synechococcales</taxon>
        <taxon>Synechococcaceae</taxon>
        <taxon>Synechococcus</taxon>
    </lineage>
</organism>
<proteinExistence type="inferred from homology"/>
<name>AROA_SYNPW</name>
<sequence>MTGSTAAARELKAGGSLKGAVRVPGDKSISHRALLFGAIADGVTTIEGLLPAEDPISTAACLRAMGAEISPIGEGDLIRVTGVGLDGLQEPDTVLDCGNSGTTMRLMLGLLAGRDGRHFVLTGDASLRRRPMQRVGQPLAMLGAEVRGRGDGNYAPLAVQGRRLRGAVVGTPVASAQVKSALLLAALTADGPTTVIEPAPSRDHSERMLKAFGADLTVGGEMGRHISVKPGARLQGQHVVVPGDISSAAFWLVAGALVPGADLTVENVGLNPTRTGVLDVLEQMGAKIEVLNRRDVAGEPVGDLHVTSGPLQPFRFGEEIMPRLVDEVPILTVAACFCEGESHISGAAELRVKETDRLAVMARQLKTMGADLDETPDGLVIRGGRPLRGAALDSETDHRVAMSLAVASLLASGDSTLERSDAAAVSYPSFWDDLARLRI</sequence>
<keyword id="KW-0028">Amino-acid biosynthesis</keyword>
<keyword id="KW-0057">Aromatic amino acid biosynthesis</keyword>
<keyword id="KW-0963">Cytoplasm</keyword>
<keyword id="KW-1185">Reference proteome</keyword>
<keyword id="KW-0808">Transferase</keyword>
<dbReference type="EC" id="2.5.1.19" evidence="1"/>
<dbReference type="EMBL" id="CT971583">
    <property type="protein sequence ID" value="CAK23458.1"/>
    <property type="molecule type" value="Genomic_DNA"/>
</dbReference>
<dbReference type="SMR" id="A5GKJ3"/>
<dbReference type="STRING" id="32051.SynWH7803_1032"/>
<dbReference type="KEGG" id="syx:SynWH7803_1032"/>
<dbReference type="eggNOG" id="COG0128">
    <property type="taxonomic scope" value="Bacteria"/>
</dbReference>
<dbReference type="HOGENOM" id="CLU_024321_0_1_3"/>
<dbReference type="OrthoDB" id="9809920at2"/>
<dbReference type="UniPathway" id="UPA00053">
    <property type="reaction ID" value="UER00089"/>
</dbReference>
<dbReference type="Proteomes" id="UP000001566">
    <property type="component" value="Chromosome"/>
</dbReference>
<dbReference type="GO" id="GO:0005737">
    <property type="term" value="C:cytoplasm"/>
    <property type="evidence" value="ECO:0007669"/>
    <property type="project" value="UniProtKB-SubCell"/>
</dbReference>
<dbReference type="GO" id="GO:0003866">
    <property type="term" value="F:3-phosphoshikimate 1-carboxyvinyltransferase activity"/>
    <property type="evidence" value="ECO:0007669"/>
    <property type="project" value="UniProtKB-UniRule"/>
</dbReference>
<dbReference type="GO" id="GO:0008652">
    <property type="term" value="P:amino acid biosynthetic process"/>
    <property type="evidence" value="ECO:0007669"/>
    <property type="project" value="UniProtKB-KW"/>
</dbReference>
<dbReference type="GO" id="GO:0009073">
    <property type="term" value="P:aromatic amino acid family biosynthetic process"/>
    <property type="evidence" value="ECO:0007669"/>
    <property type="project" value="UniProtKB-KW"/>
</dbReference>
<dbReference type="GO" id="GO:0009423">
    <property type="term" value="P:chorismate biosynthetic process"/>
    <property type="evidence" value="ECO:0007669"/>
    <property type="project" value="UniProtKB-UniRule"/>
</dbReference>
<dbReference type="CDD" id="cd01556">
    <property type="entry name" value="EPSP_synthase"/>
    <property type="match status" value="1"/>
</dbReference>
<dbReference type="FunFam" id="3.65.10.10:FF:000005">
    <property type="entry name" value="3-phosphoshikimate 1-carboxyvinyltransferase"/>
    <property type="match status" value="1"/>
</dbReference>
<dbReference type="FunFam" id="3.65.10.10:FF:000006">
    <property type="entry name" value="3-phosphoshikimate 1-carboxyvinyltransferase"/>
    <property type="match status" value="1"/>
</dbReference>
<dbReference type="Gene3D" id="3.65.10.10">
    <property type="entry name" value="Enolpyruvate transferase domain"/>
    <property type="match status" value="2"/>
</dbReference>
<dbReference type="HAMAP" id="MF_00210">
    <property type="entry name" value="EPSP_synth"/>
    <property type="match status" value="1"/>
</dbReference>
<dbReference type="InterPro" id="IPR001986">
    <property type="entry name" value="Enolpyruvate_Tfrase_dom"/>
</dbReference>
<dbReference type="InterPro" id="IPR036968">
    <property type="entry name" value="Enolpyruvate_Tfrase_sf"/>
</dbReference>
<dbReference type="InterPro" id="IPR006264">
    <property type="entry name" value="EPSP_synthase"/>
</dbReference>
<dbReference type="InterPro" id="IPR023193">
    <property type="entry name" value="EPSP_synthase_CS"/>
</dbReference>
<dbReference type="InterPro" id="IPR013792">
    <property type="entry name" value="RNA3'P_cycl/enolpyr_Trfase_a/b"/>
</dbReference>
<dbReference type="NCBIfam" id="TIGR01356">
    <property type="entry name" value="aroA"/>
    <property type="match status" value="1"/>
</dbReference>
<dbReference type="PANTHER" id="PTHR21090">
    <property type="entry name" value="AROM/DEHYDROQUINATE SYNTHASE"/>
    <property type="match status" value="1"/>
</dbReference>
<dbReference type="PANTHER" id="PTHR21090:SF5">
    <property type="entry name" value="PENTAFUNCTIONAL AROM POLYPEPTIDE"/>
    <property type="match status" value="1"/>
</dbReference>
<dbReference type="Pfam" id="PF00275">
    <property type="entry name" value="EPSP_synthase"/>
    <property type="match status" value="1"/>
</dbReference>
<dbReference type="PIRSF" id="PIRSF000505">
    <property type="entry name" value="EPSPS"/>
    <property type="match status" value="1"/>
</dbReference>
<dbReference type="SUPFAM" id="SSF55205">
    <property type="entry name" value="EPT/RTPC-like"/>
    <property type="match status" value="1"/>
</dbReference>
<dbReference type="PROSITE" id="PS00104">
    <property type="entry name" value="EPSP_SYNTHASE_1"/>
    <property type="match status" value="1"/>
</dbReference>
<dbReference type="PROSITE" id="PS00885">
    <property type="entry name" value="EPSP_SYNTHASE_2"/>
    <property type="match status" value="1"/>
</dbReference>
<reference key="1">
    <citation type="submission" date="2006-05" db="EMBL/GenBank/DDBJ databases">
        <authorList>
            <consortium name="Genoscope"/>
        </authorList>
    </citation>
    <scope>NUCLEOTIDE SEQUENCE [LARGE SCALE GENOMIC DNA]</scope>
    <source>
        <strain>WH7803</strain>
    </source>
</reference>
<evidence type="ECO:0000255" key="1">
    <source>
        <dbReference type="HAMAP-Rule" id="MF_00210"/>
    </source>
</evidence>